<dbReference type="EMBL" id="BX649578">
    <property type="protein sequence ID" value="CAK04333.1"/>
    <property type="status" value="ALT_SEQ"/>
    <property type="molecule type" value="Genomic_DNA"/>
</dbReference>
<dbReference type="EMBL" id="BC152510">
    <property type="protein sequence ID" value="AAI52511.1"/>
    <property type="molecule type" value="mRNA"/>
</dbReference>
<dbReference type="RefSeq" id="NP_001096605.1">
    <property type="nucleotide sequence ID" value="NM_001103135.1"/>
</dbReference>
<dbReference type="SMR" id="Q1LVN1"/>
<dbReference type="FunCoup" id="Q1LVN1">
    <property type="interactions" value="1663"/>
</dbReference>
<dbReference type="STRING" id="7955.ENSDARP00000123345"/>
<dbReference type="GlyCosmos" id="Q1LVN1">
    <property type="glycosylation" value="3 sites, No reported glycans"/>
</dbReference>
<dbReference type="PaxDb" id="7955-ENSDARP00000123345"/>
<dbReference type="Ensembl" id="ENSDART00000099476">
    <property type="protein sequence ID" value="ENSDARP00000090250"/>
    <property type="gene ID" value="ENSDARG00000068709"/>
</dbReference>
<dbReference type="GeneID" id="798908"/>
<dbReference type="KEGG" id="dre:798908"/>
<dbReference type="AGR" id="ZFIN:ZDB-GENE-050419-78"/>
<dbReference type="CTD" id="400451"/>
<dbReference type="ZFIN" id="ZDB-GENE-050419-78">
    <property type="gene designation" value="fam174b"/>
</dbReference>
<dbReference type="eggNOG" id="ENOG502S4RE">
    <property type="taxonomic scope" value="Eukaryota"/>
</dbReference>
<dbReference type="InParanoid" id="Q1LVN1"/>
<dbReference type="OMA" id="TSKNDTH"/>
<dbReference type="OrthoDB" id="9950075at2759"/>
<dbReference type="PhylomeDB" id="Q1LVN1"/>
<dbReference type="TreeFam" id="TF105425"/>
<dbReference type="PRO" id="PR:Q1LVN1"/>
<dbReference type="Proteomes" id="UP000000437">
    <property type="component" value="Chromosome 18"/>
</dbReference>
<dbReference type="Bgee" id="ENSDARG00000068709">
    <property type="expression patterns" value="Expressed in heart and 20 other cell types or tissues"/>
</dbReference>
<dbReference type="ExpressionAtlas" id="Q1LVN1">
    <property type="expression patterns" value="baseline and differential"/>
</dbReference>
<dbReference type="GO" id="GO:0005794">
    <property type="term" value="C:Golgi apparatus"/>
    <property type="evidence" value="ECO:0000250"/>
    <property type="project" value="UniProtKB"/>
</dbReference>
<dbReference type="GO" id="GO:0005886">
    <property type="term" value="C:plasma membrane"/>
    <property type="evidence" value="ECO:0000250"/>
    <property type="project" value="UniProtKB"/>
</dbReference>
<dbReference type="GO" id="GO:0007030">
    <property type="term" value="P:Golgi organization"/>
    <property type="evidence" value="ECO:0000250"/>
    <property type="project" value="UniProtKB"/>
</dbReference>
<dbReference type="InterPro" id="IPR009565">
    <property type="entry name" value="FAM174-like"/>
</dbReference>
<dbReference type="PANTHER" id="PTHR28607">
    <property type="entry name" value="EXPRESSED PROTEIN"/>
    <property type="match status" value="1"/>
</dbReference>
<dbReference type="PANTHER" id="PTHR28607:SF3">
    <property type="entry name" value="MEMBRANE PROTEIN FAM174B"/>
    <property type="match status" value="1"/>
</dbReference>
<dbReference type="Pfam" id="PF06679">
    <property type="entry name" value="DUF1180"/>
    <property type="match status" value="1"/>
</dbReference>
<keyword id="KW-1003">Cell membrane</keyword>
<keyword id="KW-0325">Glycoprotein</keyword>
<keyword id="KW-0333">Golgi apparatus</keyword>
<keyword id="KW-0472">Membrane</keyword>
<keyword id="KW-1185">Reference proteome</keyword>
<keyword id="KW-0732">Signal</keyword>
<keyword id="KW-0812">Transmembrane</keyword>
<keyword id="KW-1133">Transmembrane helix</keyword>
<protein>
    <recommendedName>
        <fullName>Membrane protein FAM174B</fullName>
    </recommendedName>
</protein>
<organism>
    <name type="scientific">Danio rerio</name>
    <name type="common">Zebrafish</name>
    <name type="synonym">Brachydanio rerio</name>
    <dbReference type="NCBI Taxonomy" id="7955"/>
    <lineage>
        <taxon>Eukaryota</taxon>
        <taxon>Metazoa</taxon>
        <taxon>Chordata</taxon>
        <taxon>Craniata</taxon>
        <taxon>Vertebrata</taxon>
        <taxon>Euteleostomi</taxon>
        <taxon>Actinopterygii</taxon>
        <taxon>Neopterygii</taxon>
        <taxon>Teleostei</taxon>
        <taxon>Ostariophysi</taxon>
        <taxon>Cypriniformes</taxon>
        <taxon>Danionidae</taxon>
        <taxon>Danioninae</taxon>
        <taxon>Danio</taxon>
    </lineage>
</organism>
<feature type="signal peptide" evidence="2">
    <location>
        <begin position="1"/>
        <end position="19"/>
    </location>
</feature>
<feature type="chain" id="PRO_0000326116" description="Membrane protein FAM174B">
    <location>
        <begin position="20"/>
        <end position="133"/>
    </location>
</feature>
<feature type="topological domain" description="Extracellular" evidence="2">
    <location>
        <begin position="20"/>
        <end position="67"/>
    </location>
</feature>
<feature type="transmembrane region" description="Helical" evidence="2">
    <location>
        <begin position="68"/>
        <end position="88"/>
    </location>
</feature>
<feature type="topological domain" description="Cytoplasmic" evidence="2">
    <location>
        <begin position="89"/>
        <end position="133"/>
    </location>
</feature>
<feature type="region of interest" description="Disordered" evidence="3">
    <location>
        <begin position="22"/>
        <end position="47"/>
    </location>
</feature>
<feature type="region of interest" description="Disordered" evidence="3">
    <location>
        <begin position="113"/>
        <end position="133"/>
    </location>
</feature>
<feature type="compositionally biased region" description="Acidic residues" evidence="3">
    <location>
        <begin position="117"/>
        <end position="126"/>
    </location>
</feature>
<feature type="glycosylation site" description="N-linked (GlcNAc...) asparagine" evidence="2">
    <location>
        <position position="32"/>
    </location>
</feature>
<feature type="glycosylation site" description="N-linked (GlcNAc...) asparagine" evidence="2">
    <location>
        <position position="45"/>
    </location>
</feature>
<feature type="glycosylation site" description="N-linked (GlcNAc...) asparagine" evidence="2">
    <location>
        <position position="67"/>
    </location>
</feature>
<reference key="1">
    <citation type="journal article" date="2013" name="Nature">
        <title>The zebrafish reference genome sequence and its relationship to the human genome.</title>
        <authorList>
            <person name="Howe K."/>
            <person name="Clark M.D."/>
            <person name="Torroja C.F."/>
            <person name="Torrance J."/>
            <person name="Berthelot C."/>
            <person name="Muffato M."/>
            <person name="Collins J.E."/>
            <person name="Humphray S."/>
            <person name="McLaren K."/>
            <person name="Matthews L."/>
            <person name="McLaren S."/>
            <person name="Sealy I."/>
            <person name="Caccamo M."/>
            <person name="Churcher C."/>
            <person name="Scott C."/>
            <person name="Barrett J.C."/>
            <person name="Koch R."/>
            <person name="Rauch G.J."/>
            <person name="White S."/>
            <person name="Chow W."/>
            <person name="Kilian B."/>
            <person name="Quintais L.T."/>
            <person name="Guerra-Assuncao J.A."/>
            <person name="Zhou Y."/>
            <person name="Gu Y."/>
            <person name="Yen J."/>
            <person name="Vogel J.H."/>
            <person name="Eyre T."/>
            <person name="Redmond S."/>
            <person name="Banerjee R."/>
            <person name="Chi J."/>
            <person name="Fu B."/>
            <person name="Langley E."/>
            <person name="Maguire S.F."/>
            <person name="Laird G.K."/>
            <person name="Lloyd D."/>
            <person name="Kenyon E."/>
            <person name="Donaldson S."/>
            <person name="Sehra H."/>
            <person name="Almeida-King J."/>
            <person name="Loveland J."/>
            <person name="Trevanion S."/>
            <person name="Jones M."/>
            <person name="Quail M."/>
            <person name="Willey D."/>
            <person name="Hunt A."/>
            <person name="Burton J."/>
            <person name="Sims S."/>
            <person name="McLay K."/>
            <person name="Plumb B."/>
            <person name="Davis J."/>
            <person name="Clee C."/>
            <person name="Oliver K."/>
            <person name="Clark R."/>
            <person name="Riddle C."/>
            <person name="Elliot D."/>
            <person name="Threadgold G."/>
            <person name="Harden G."/>
            <person name="Ware D."/>
            <person name="Begum S."/>
            <person name="Mortimore B."/>
            <person name="Kerry G."/>
            <person name="Heath P."/>
            <person name="Phillimore B."/>
            <person name="Tracey A."/>
            <person name="Corby N."/>
            <person name="Dunn M."/>
            <person name="Johnson C."/>
            <person name="Wood J."/>
            <person name="Clark S."/>
            <person name="Pelan S."/>
            <person name="Griffiths G."/>
            <person name="Smith M."/>
            <person name="Glithero R."/>
            <person name="Howden P."/>
            <person name="Barker N."/>
            <person name="Lloyd C."/>
            <person name="Stevens C."/>
            <person name="Harley J."/>
            <person name="Holt K."/>
            <person name="Panagiotidis G."/>
            <person name="Lovell J."/>
            <person name="Beasley H."/>
            <person name="Henderson C."/>
            <person name="Gordon D."/>
            <person name="Auger K."/>
            <person name="Wright D."/>
            <person name="Collins J."/>
            <person name="Raisen C."/>
            <person name="Dyer L."/>
            <person name="Leung K."/>
            <person name="Robertson L."/>
            <person name="Ambridge K."/>
            <person name="Leongamornlert D."/>
            <person name="McGuire S."/>
            <person name="Gilderthorp R."/>
            <person name="Griffiths C."/>
            <person name="Manthravadi D."/>
            <person name="Nichol S."/>
            <person name="Barker G."/>
            <person name="Whitehead S."/>
            <person name="Kay M."/>
            <person name="Brown J."/>
            <person name="Murnane C."/>
            <person name="Gray E."/>
            <person name="Humphries M."/>
            <person name="Sycamore N."/>
            <person name="Barker D."/>
            <person name="Saunders D."/>
            <person name="Wallis J."/>
            <person name="Babbage A."/>
            <person name="Hammond S."/>
            <person name="Mashreghi-Mohammadi M."/>
            <person name="Barr L."/>
            <person name="Martin S."/>
            <person name="Wray P."/>
            <person name="Ellington A."/>
            <person name="Matthews N."/>
            <person name="Ellwood M."/>
            <person name="Woodmansey R."/>
            <person name="Clark G."/>
            <person name="Cooper J."/>
            <person name="Tromans A."/>
            <person name="Grafham D."/>
            <person name="Skuce C."/>
            <person name="Pandian R."/>
            <person name="Andrews R."/>
            <person name="Harrison E."/>
            <person name="Kimberley A."/>
            <person name="Garnett J."/>
            <person name="Fosker N."/>
            <person name="Hall R."/>
            <person name="Garner P."/>
            <person name="Kelly D."/>
            <person name="Bird C."/>
            <person name="Palmer S."/>
            <person name="Gehring I."/>
            <person name="Berger A."/>
            <person name="Dooley C.M."/>
            <person name="Ersan-Urun Z."/>
            <person name="Eser C."/>
            <person name="Geiger H."/>
            <person name="Geisler M."/>
            <person name="Karotki L."/>
            <person name="Kirn A."/>
            <person name="Konantz J."/>
            <person name="Konantz M."/>
            <person name="Oberlander M."/>
            <person name="Rudolph-Geiger S."/>
            <person name="Teucke M."/>
            <person name="Lanz C."/>
            <person name="Raddatz G."/>
            <person name="Osoegawa K."/>
            <person name="Zhu B."/>
            <person name="Rapp A."/>
            <person name="Widaa S."/>
            <person name="Langford C."/>
            <person name="Yang F."/>
            <person name="Schuster S.C."/>
            <person name="Carter N.P."/>
            <person name="Harrow J."/>
            <person name="Ning Z."/>
            <person name="Herrero J."/>
            <person name="Searle S.M."/>
            <person name="Enright A."/>
            <person name="Geisler R."/>
            <person name="Plasterk R.H."/>
            <person name="Lee C."/>
            <person name="Westerfield M."/>
            <person name="de Jong P.J."/>
            <person name="Zon L.I."/>
            <person name="Postlethwait J.H."/>
            <person name="Nusslein-Volhard C."/>
            <person name="Hubbard T.J."/>
            <person name="Roest Crollius H."/>
            <person name="Rogers J."/>
            <person name="Stemple D.L."/>
        </authorList>
    </citation>
    <scope>NUCLEOTIDE SEQUENCE [LARGE SCALE GENOMIC DNA]</scope>
    <source>
        <strain>Tuebingen</strain>
    </source>
</reference>
<reference key="2">
    <citation type="submission" date="2007-08" db="EMBL/GenBank/DDBJ databases">
        <authorList>
            <consortium name="NIH - Zebrafish Gene Collection (ZGC) project"/>
        </authorList>
    </citation>
    <scope>NUCLEOTIDE SEQUENCE [LARGE SCALE MRNA]</scope>
    <source>
        <tissue>Olfactory epithelium</tissue>
    </source>
</reference>
<name>F174B_DANRE</name>
<gene>
    <name type="primary">Fam174b</name>
    <name type="ORF">si:ch211-196l7.3</name>
</gene>
<comment type="function">
    <text evidence="1">Essential for Golgi structural integrity.</text>
</comment>
<comment type="subcellular location">
    <subcellularLocation>
        <location evidence="1">Cell membrane</location>
        <topology evidence="2">Single-pass type I membrane protein</topology>
    </subcellularLocation>
    <subcellularLocation>
        <location evidence="1">Golgi apparatus</location>
    </subcellularLocation>
</comment>
<comment type="similarity">
    <text evidence="4">Belongs to the FAM174 family.</text>
</comment>
<comment type="sequence caution" evidence="4">
    <conflict type="erroneous gene model prediction">
        <sequence resource="EMBL-CDS" id="CAK04333"/>
    </conflict>
</comment>
<evidence type="ECO:0000250" key="1">
    <source>
        <dbReference type="UniProtKB" id="Q3ZCQ3"/>
    </source>
</evidence>
<evidence type="ECO:0000255" key="2"/>
<evidence type="ECO:0000256" key="3">
    <source>
        <dbReference type="SAM" id="MobiDB-lite"/>
    </source>
</evidence>
<evidence type="ECO:0000305" key="4"/>
<accession>Q1LVN1</accession>
<accession>A7MD72</accession>
<sequence>MWLYTFAVALIVIAQEINGEPHTRPSSATPLNATLPPQEEGSAQNTTDAAVGSRLSTILRDLPTIKNISIFICVLTTLLITCLVIKICRSARKIRKTRKYDIITTPAERVEMAPLNEENDEEDDSTLFDVKYR</sequence>
<proteinExistence type="evidence at transcript level"/>